<comment type="function">
    <text evidence="2">Monocarboxylate transporter selective for taurine. May associate with BSG/CD147 or EMB/GP70 ancillary proteins to mediate facilitative efflux or influx of taurine across the plasma membrane. The transport is pH- and sodium-independent. Rather low-affinity, is likely effective for taurine transport in tissues where taurine is present at high concentrations.</text>
</comment>
<comment type="catalytic activity">
    <reaction evidence="2">
        <text>taurine(out) = taurine(in)</text>
        <dbReference type="Rhea" id="RHEA:66328"/>
        <dbReference type="ChEBI" id="CHEBI:507393"/>
    </reaction>
    <physiologicalReaction direction="left-to-right" evidence="2">
        <dbReference type="Rhea" id="RHEA:66329"/>
    </physiologicalReaction>
    <physiologicalReaction direction="right-to-left" evidence="2">
        <dbReference type="Rhea" id="RHEA:66330"/>
    </physiologicalReaction>
</comment>
<comment type="subunit">
    <text evidence="2">Forms functional complexes with BSG/CD147 or EMB/GP70 ancillary proteins.</text>
</comment>
<comment type="subcellular location">
    <subcellularLocation>
        <location evidence="2">Basolateral cell membrane</location>
        <topology evidence="3">Multi-pass membrane protein</topology>
    </subcellularLocation>
</comment>
<comment type="alternative products">
    <event type="alternative splicing"/>
    <isoform>
        <id>B1AT66-1</id>
        <name>1</name>
        <sequence type="displayed"/>
    </isoform>
    <isoform>
        <id>B1AT66-2</id>
        <name>2</name>
        <sequence type="described" ref="VSP_042512"/>
    </isoform>
</comment>
<comment type="similarity">
    <text evidence="7">Belongs to the major facilitator superfamily. Monocarboxylate porter (TC 2.A.1.13) family.</text>
</comment>
<proteinExistence type="evidence at protein level"/>
<feature type="chain" id="PRO_0000416126" description="Monocarboxylate transporter 7">
    <location>
        <begin position="1"/>
        <end position="607"/>
    </location>
</feature>
<feature type="topological domain" description="Cytoplasmic" evidence="3">
    <location>
        <begin position="1"/>
        <end position="105"/>
    </location>
</feature>
<feature type="transmembrane region" description="Helical" evidence="3">
    <location>
        <begin position="106"/>
        <end position="126"/>
    </location>
</feature>
<feature type="topological domain" description="Extracellular" evidence="3">
    <location>
        <begin position="127"/>
        <end position="146"/>
    </location>
</feature>
<feature type="transmembrane region" description="Helical" evidence="3">
    <location>
        <begin position="147"/>
        <end position="167"/>
    </location>
</feature>
<feature type="topological domain" description="Cytoplasmic" evidence="3">
    <location>
        <begin position="168"/>
        <end position="175"/>
    </location>
</feature>
<feature type="transmembrane region" description="Helical" evidence="3">
    <location>
        <begin position="176"/>
        <end position="196"/>
    </location>
</feature>
<feature type="topological domain" description="Extracellular" evidence="3">
    <location>
        <begin position="197"/>
        <end position="202"/>
    </location>
</feature>
<feature type="transmembrane region" description="Helical" evidence="3">
    <location>
        <begin position="203"/>
        <end position="223"/>
    </location>
</feature>
<feature type="topological domain" description="Cytoplasmic" evidence="3">
    <location>
        <begin position="224"/>
        <end position="233"/>
    </location>
</feature>
<feature type="transmembrane region" description="Helical" evidence="3">
    <location>
        <begin position="234"/>
        <end position="254"/>
    </location>
</feature>
<feature type="topological domain" description="Extracellular" evidence="3">
    <location>
        <begin position="255"/>
        <end position="268"/>
    </location>
</feature>
<feature type="transmembrane region" description="Helical" evidence="3">
    <location>
        <begin position="269"/>
        <end position="289"/>
    </location>
</feature>
<feature type="topological domain" description="Cytoplasmic" evidence="3">
    <location>
        <begin position="290"/>
        <end position="383"/>
    </location>
</feature>
<feature type="transmembrane region" description="Helical" evidence="3">
    <location>
        <begin position="384"/>
        <end position="404"/>
    </location>
</feature>
<feature type="topological domain" description="Extracellular" evidence="3">
    <location>
        <begin position="405"/>
        <end position="414"/>
    </location>
</feature>
<feature type="transmembrane region" description="Helical" evidence="3">
    <location>
        <begin position="415"/>
        <end position="435"/>
    </location>
</feature>
<feature type="topological domain" description="Cytoplasmic" evidence="3">
    <location>
        <begin position="436"/>
        <end position="442"/>
    </location>
</feature>
<feature type="transmembrane region" description="Helical" evidence="3">
    <location>
        <begin position="443"/>
        <end position="463"/>
    </location>
</feature>
<feature type="topological domain" description="Extracellular" evidence="3">
    <location>
        <begin position="464"/>
        <end position="465"/>
    </location>
</feature>
<feature type="transmembrane region" description="Helical" evidence="3">
    <location>
        <begin position="466"/>
        <end position="486"/>
    </location>
</feature>
<feature type="topological domain" description="Cytoplasmic" evidence="3">
    <location>
        <begin position="487"/>
        <end position="507"/>
    </location>
</feature>
<feature type="transmembrane region" description="Helical" evidence="3">
    <location>
        <begin position="508"/>
        <end position="528"/>
    </location>
</feature>
<feature type="topological domain" description="Extracellular" evidence="3">
    <location>
        <begin position="529"/>
        <end position="536"/>
    </location>
</feature>
<feature type="transmembrane region" description="Helical" evidence="3">
    <location>
        <begin position="537"/>
        <end position="557"/>
    </location>
</feature>
<feature type="topological domain" description="Cytoplasmic" evidence="3">
    <location>
        <begin position="558"/>
        <end position="607"/>
    </location>
</feature>
<feature type="region of interest" description="Disordered" evidence="4">
    <location>
        <begin position="1"/>
        <end position="84"/>
    </location>
</feature>
<feature type="modified residue" description="Phosphoserine" evidence="9">
    <location>
        <position position="319"/>
    </location>
</feature>
<feature type="modified residue" description="Phosphoserine" evidence="9">
    <location>
        <position position="322"/>
    </location>
</feature>
<feature type="modified residue" description="Phosphoserine" evidence="9">
    <location>
        <position position="325"/>
    </location>
</feature>
<feature type="modified residue" description="Phosphoserine" evidence="1">
    <location>
        <position position="332"/>
    </location>
</feature>
<feature type="splice variant" id="VSP_042512" description="In isoform 2." evidence="5 6">
    <location>
        <begin position="1"/>
        <end position="84"/>
    </location>
</feature>
<feature type="sequence conflict" description="In Ref. 1; BAC27657." evidence="7" ref="1">
    <original>A</original>
    <variation>T</variation>
    <location>
        <position position="37"/>
    </location>
</feature>
<feature type="sequence conflict" description="In Ref. 1; BAC27657." evidence="7" ref="1">
    <original>E</original>
    <variation>D</variation>
    <location>
        <position position="243"/>
    </location>
</feature>
<feature type="sequence conflict" description="In Ref. 1; BAE41817." evidence="7" ref="1">
    <original>E</original>
    <variation>K</variation>
    <location>
        <position position="302"/>
    </location>
</feature>
<protein>
    <recommendedName>
        <fullName evidence="2">Monocarboxylate transporter 7</fullName>
        <shortName evidence="2">MCT 7</shortName>
    </recommendedName>
    <alternativeName>
        <fullName>Monocarboxylate transporter 6</fullName>
        <shortName>MCT 6</shortName>
    </alternativeName>
    <alternativeName>
        <fullName>Solute carrier family 16 member 6</fullName>
    </alternativeName>
</protein>
<reference key="1">
    <citation type="journal article" date="2005" name="Science">
        <title>The transcriptional landscape of the mammalian genome.</title>
        <authorList>
            <person name="Carninci P."/>
            <person name="Kasukawa T."/>
            <person name="Katayama S."/>
            <person name="Gough J."/>
            <person name="Frith M.C."/>
            <person name="Maeda N."/>
            <person name="Oyama R."/>
            <person name="Ravasi T."/>
            <person name="Lenhard B."/>
            <person name="Wells C."/>
            <person name="Kodzius R."/>
            <person name="Shimokawa K."/>
            <person name="Bajic V.B."/>
            <person name="Brenner S.E."/>
            <person name="Batalov S."/>
            <person name="Forrest A.R."/>
            <person name="Zavolan M."/>
            <person name="Davis M.J."/>
            <person name="Wilming L.G."/>
            <person name="Aidinis V."/>
            <person name="Allen J.E."/>
            <person name="Ambesi-Impiombato A."/>
            <person name="Apweiler R."/>
            <person name="Aturaliya R.N."/>
            <person name="Bailey T.L."/>
            <person name="Bansal M."/>
            <person name="Baxter L."/>
            <person name="Beisel K.W."/>
            <person name="Bersano T."/>
            <person name="Bono H."/>
            <person name="Chalk A.M."/>
            <person name="Chiu K.P."/>
            <person name="Choudhary V."/>
            <person name="Christoffels A."/>
            <person name="Clutterbuck D.R."/>
            <person name="Crowe M.L."/>
            <person name="Dalla E."/>
            <person name="Dalrymple B.P."/>
            <person name="de Bono B."/>
            <person name="Della Gatta G."/>
            <person name="di Bernardo D."/>
            <person name="Down T."/>
            <person name="Engstrom P."/>
            <person name="Fagiolini M."/>
            <person name="Faulkner G."/>
            <person name="Fletcher C.F."/>
            <person name="Fukushima T."/>
            <person name="Furuno M."/>
            <person name="Futaki S."/>
            <person name="Gariboldi M."/>
            <person name="Georgii-Hemming P."/>
            <person name="Gingeras T.R."/>
            <person name="Gojobori T."/>
            <person name="Green R.E."/>
            <person name="Gustincich S."/>
            <person name="Harbers M."/>
            <person name="Hayashi Y."/>
            <person name="Hensch T.K."/>
            <person name="Hirokawa N."/>
            <person name="Hill D."/>
            <person name="Huminiecki L."/>
            <person name="Iacono M."/>
            <person name="Ikeo K."/>
            <person name="Iwama A."/>
            <person name="Ishikawa T."/>
            <person name="Jakt M."/>
            <person name="Kanapin A."/>
            <person name="Katoh M."/>
            <person name="Kawasawa Y."/>
            <person name="Kelso J."/>
            <person name="Kitamura H."/>
            <person name="Kitano H."/>
            <person name="Kollias G."/>
            <person name="Krishnan S.P."/>
            <person name="Kruger A."/>
            <person name="Kummerfeld S.K."/>
            <person name="Kurochkin I.V."/>
            <person name="Lareau L.F."/>
            <person name="Lazarevic D."/>
            <person name="Lipovich L."/>
            <person name="Liu J."/>
            <person name="Liuni S."/>
            <person name="McWilliam S."/>
            <person name="Madan Babu M."/>
            <person name="Madera M."/>
            <person name="Marchionni L."/>
            <person name="Matsuda H."/>
            <person name="Matsuzawa S."/>
            <person name="Miki H."/>
            <person name="Mignone F."/>
            <person name="Miyake S."/>
            <person name="Morris K."/>
            <person name="Mottagui-Tabar S."/>
            <person name="Mulder N."/>
            <person name="Nakano N."/>
            <person name="Nakauchi H."/>
            <person name="Ng P."/>
            <person name="Nilsson R."/>
            <person name="Nishiguchi S."/>
            <person name="Nishikawa S."/>
            <person name="Nori F."/>
            <person name="Ohara O."/>
            <person name="Okazaki Y."/>
            <person name="Orlando V."/>
            <person name="Pang K.C."/>
            <person name="Pavan W.J."/>
            <person name="Pavesi G."/>
            <person name="Pesole G."/>
            <person name="Petrovsky N."/>
            <person name="Piazza S."/>
            <person name="Reed J."/>
            <person name="Reid J.F."/>
            <person name="Ring B.Z."/>
            <person name="Ringwald M."/>
            <person name="Rost B."/>
            <person name="Ruan Y."/>
            <person name="Salzberg S.L."/>
            <person name="Sandelin A."/>
            <person name="Schneider C."/>
            <person name="Schoenbach C."/>
            <person name="Sekiguchi K."/>
            <person name="Semple C.A."/>
            <person name="Seno S."/>
            <person name="Sessa L."/>
            <person name="Sheng Y."/>
            <person name="Shibata Y."/>
            <person name="Shimada H."/>
            <person name="Shimada K."/>
            <person name="Silva D."/>
            <person name="Sinclair B."/>
            <person name="Sperling S."/>
            <person name="Stupka E."/>
            <person name="Sugiura K."/>
            <person name="Sultana R."/>
            <person name="Takenaka Y."/>
            <person name="Taki K."/>
            <person name="Tammoja K."/>
            <person name="Tan S.L."/>
            <person name="Tang S."/>
            <person name="Taylor M.S."/>
            <person name="Tegner J."/>
            <person name="Teichmann S.A."/>
            <person name="Ueda H.R."/>
            <person name="van Nimwegen E."/>
            <person name="Verardo R."/>
            <person name="Wei C.L."/>
            <person name="Yagi K."/>
            <person name="Yamanishi H."/>
            <person name="Zabarovsky E."/>
            <person name="Zhu S."/>
            <person name="Zimmer A."/>
            <person name="Hide W."/>
            <person name="Bult C."/>
            <person name="Grimmond S.M."/>
            <person name="Teasdale R.D."/>
            <person name="Liu E.T."/>
            <person name="Brusic V."/>
            <person name="Quackenbush J."/>
            <person name="Wahlestedt C."/>
            <person name="Mattick J.S."/>
            <person name="Hume D.A."/>
            <person name="Kai C."/>
            <person name="Sasaki D."/>
            <person name="Tomaru Y."/>
            <person name="Fukuda S."/>
            <person name="Kanamori-Katayama M."/>
            <person name="Suzuki M."/>
            <person name="Aoki J."/>
            <person name="Arakawa T."/>
            <person name="Iida J."/>
            <person name="Imamura K."/>
            <person name="Itoh M."/>
            <person name="Kato T."/>
            <person name="Kawaji H."/>
            <person name="Kawagashira N."/>
            <person name="Kawashima T."/>
            <person name="Kojima M."/>
            <person name="Kondo S."/>
            <person name="Konno H."/>
            <person name="Nakano K."/>
            <person name="Ninomiya N."/>
            <person name="Nishio T."/>
            <person name="Okada M."/>
            <person name="Plessy C."/>
            <person name="Shibata K."/>
            <person name="Shiraki T."/>
            <person name="Suzuki S."/>
            <person name="Tagami M."/>
            <person name="Waki K."/>
            <person name="Watahiki A."/>
            <person name="Okamura-Oho Y."/>
            <person name="Suzuki H."/>
            <person name="Kawai J."/>
            <person name="Hayashizaki Y."/>
        </authorList>
    </citation>
    <scope>NUCLEOTIDE SEQUENCE [LARGE SCALE MRNA] (ISOFORMS 1 AND 2)</scope>
    <source>
        <strain>C57BL/6J</strain>
        <strain>NOD</strain>
        <tissue>Medulla oblongata</tissue>
    </source>
</reference>
<reference key="2">
    <citation type="journal article" date="2009" name="PLoS Biol.">
        <title>Lineage-specific biology revealed by a finished genome assembly of the mouse.</title>
        <authorList>
            <person name="Church D.M."/>
            <person name="Goodstadt L."/>
            <person name="Hillier L.W."/>
            <person name="Zody M.C."/>
            <person name="Goldstein S."/>
            <person name="She X."/>
            <person name="Bult C.J."/>
            <person name="Agarwala R."/>
            <person name="Cherry J.L."/>
            <person name="DiCuccio M."/>
            <person name="Hlavina W."/>
            <person name="Kapustin Y."/>
            <person name="Meric P."/>
            <person name="Maglott D."/>
            <person name="Birtle Z."/>
            <person name="Marques A.C."/>
            <person name="Graves T."/>
            <person name="Zhou S."/>
            <person name="Teague B."/>
            <person name="Potamousis K."/>
            <person name="Churas C."/>
            <person name="Place M."/>
            <person name="Herschleb J."/>
            <person name="Runnheim R."/>
            <person name="Forrest D."/>
            <person name="Amos-Landgraf J."/>
            <person name="Schwartz D.C."/>
            <person name="Cheng Z."/>
            <person name="Lindblad-Toh K."/>
            <person name="Eichler E.E."/>
            <person name="Ponting C.P."/>
        </authorList>
    </citation>
    <scope>NUCLEOTIDE SEQUENCE [LARGE SCALE GENOMIC DNA]</scope>
    <source>
        <strain>C57BL/6J</strain>
    </source>
</reference>
<reference key="3">
    <citation type="submission" date="2005-07" db="EMBL/GenBank/DDBJ databases">
        <authorList>
            <person name="Mural R.J."/>
            <person name="Adams M.D."/>
            <person name="Myers E.W."/>
            <person name="Smith H.O."/>
            <person name="Venter J.C."/>
        </authorList>
    </citation>
    <scope>NUCLEOTIDE SEQUENCE [LARGE SCALE GENOMIC DNA]</scope>
</reference>
<reference key="4">
    <citation type="journal article" date="2004" name="Genome Res.">
        <title>The status, quality, and expansion of the NIH full-length cDNA project: the Mammalian Gene Collection (MGC).</title>
        <authorList>
            <consortium name="The MGC Project Team"/>
        </authorList>
    </citation>
    <scope>NUCLEOTIDE SEQUENCE [LARGE SCALE MRNA] (ISOFORM 2)</scope>
    <source>
        <tissue>Eye</tissue>
    </source>
</reference>
<reference key="5">
    <citation type="journal article" date="2009" name="Immunity">
        <title>The phagosomal proteome in interferon-gamma-activated macrophages.</title>
        <authorList>
            <person name="Trost M."/>
            <person name="English L."/>
            <person name="Lemieux S."/>
            <person name="Courcelles M."/>
            <person name="Desjardins M."/>
            <person name="Thibault P."/>
        </authorList>
    </citation>
    <scope>PHOSPHORYLATION [LARGE SCALE ANALYSIS] AT SER-319; SER-322 AND SER-325</scope>
    <scope>IDENTIFICATION BY MASS SPECTROMETRY [LARGE SCALE ANALYSIS]</scope>
</reference>
<gene>
    <name evidence="2 8" type="primary">Slc16a6</name>
    <name evidence="2" type="synonym">Mct7</name>
</gene>
<evidence type="ECO:0000250" key="1">
    <source>
        <dbReference type="UniProtKB" id="O15403"/>
    </source>
</evidence>
<evidence type="ECO:0000250" key="2">
    <source>
        <dbReference type="UniProtKB" id="Q7TMR7"/>
    </source>
</evidence>
<evidence type="ECO:0000255" key="3"/>
<evidence type="ECO:0000256" key="4">
    <source>
        <dbReference type="SAM" id="MobiDB-lite"/>
    </source>
</evidence>
<evidence type="ECO:0000303" key="5">
    <source>
    </source>
</evidence>
<evidence type="ECO:0000303" key="6">
    <source>
    </source>
</evidence>
<evidence type="ECO:0000305" key="7"/>
<evidence type="ECO:0000312" key="8">
    <source>
        <dbReference type="MGI" id="MGI:2144585"/>
    </source>
</evidence>
<evidence type="ECO:0007744" key="9">
    <source>
    </source>
</evidence>
<dbReference type="EMBL" id="AK032026">
    <property type="protein sequence ID" value="BAC27657.1"/>
    <property type="molecule type" value="mRNA"/>
</dbReference>
<dbReference type="EMBL" id="AK170472">
    <property type="protein sequence ID" value="BAE41817.1"/>
    <property type="molecule type" value="mRNA"/>
</dbReference>
<dbReference type="EMBL" id="AL645791">
    <property type="status" value="NOT_ANNOTATED_CDS"/>
    <property type="molecule type" value="Genomic_DNA"/>
</dbReference>
<dbReference type="EMBL" id="CH466558">
    <property type="protein sequence ID" value="EDL34359.1"/>
    <property type="molecule type" value="Genomic_DNA"/>
</dbReference>
<dbReference type="EMBL" id="CH466558">
    <property type="protein sequence ID" value="EDL34361.1"/>
    <property type="molecule type" value="Genomic_DNA"/>
</dbReference>
<dbReference type="EMBL" id="BC017129">
    <property type="protein sequence ID" value="AAH17129.1"/>
    <property type="molecule type" value="mRNA"/>
</dbReference>
<dbReference type="CCDS" id="CCDS25580.1">
    <molecule id="B1AT66-2"/>
</dbReference>
<dbReference type="CCDS" id="CCDS36360.1">
    <molecule id="B1AT66-2"/>
</dbReference>
<dbReference type="RefSeq" id="NP_001025013.2">
    <molecule id="B1AT66-2"/>
    <property type="nucleotide sequence ID" value="NM_001029842.3"/>
</dbReference>
<dbReference type="RefSeq" id="NP_598799.1">
    <molecule id="B1AT66-2"/>
    <property type="nucleotide sequence ID" value="NM_134038.4"/>
</dbReference>
<dbReference type="RefSeq" id="XP_006532010.1">
    <property type="nucleotide sequence ID" value="XM_006531947.2"/>
</dbReference>
<dbReference type="RefSeq" id="XP_036012104.1">
    <molecule id="B1AT66-2"/>
    <property type="nucleotide sequence ID" value="XM_036156211.1"/>
</dbReference>
<dbReference type="SMR" id="B1AT66"/>
<dbReference type="BioGRID" id="222670">
    <property type="interactions" value="1"/>
</dbReference>
<dbReference type="FunCoup" id="B1AT66">
    <property type="interactions" value="44"/>
</dbReference>
<dbReference type="iPTMnet" id="B1AT66"/>
<dbReference type="PhosphoSitePlus" id="B1AT66"/>
<dbReference type="SwissPalm" id="B1AT66"/>
<dbReference type="PaxDb" id="10090-ENSMUSP00000065628"/>
<dbReference type="PeptideAtlas" id="B1AT66"/>
<dbReference type="ProteomicsDB" id="290281">
    <molecule id="B1AT66-1"/>
</dbReference>
<dbReference type="ProteomicsDB" id="290282">
    <molecule id="B1AT66-2"/>
</dbReference>
<dbReference type="Antibodypedia" id="31766">
    <property type="antibodies" value="44 antibodies from 19 providers"/>
</dbReference>
<dbReference type="DNASU" id="104681"/>
<dbReference type="Ensembl" id="ENSMUST00000070152.12">
    <molecule id="B1AT66-1"/>
    <property type="protein sequence ID" value="ENSMUSP00000065628.6"/>
    <property type="gene ID" value="ENSMUSG00000041920.15"/>
</dbReference>
<dbReference type="Ensembl" id="ENSMUST00000070872.13">
    <molecule id="B1AT66-2"/>
    <property type="protein sequence ID" value="ENSMUSP00000067423.7"/>
    <property type="gene ID" value="ENSMUSG00000041920.15"/>
</dbReference>
<dbReference type="GeneID" id="104681"/>
<dbReference type="KEGG" id="mmu:104681"/>
<dbReference type="UCSC" id="uc007mcl.1">
    <molecule id="B1AT66-1"/>
    <property type="organism name" value="mouse"/>
</dbReference>
<dbReference type="AGR" id="MGI:2144585"/>
<dbReference type="CTD" id="9120"/>
<dbReference type="MGI" id="MGI:2144585">
    <property type="gene designation" value="Slc16a6"/>
</dbReference>
<dbReference type="VEuPathDB" id="HostDB:ENSMUSG00000041920"/>
<dbReference type="eggNOG" id="KOG2504">
    <property type="taxonomic scope" value="Eukaryota"/>
</dbReference>
<dbReference type="GeneTree" id="ENSGT00940000155575"/>
<dbReference type="HOGENOM" id="CLU_001265_59_1_1"/>
<dbReference type="InParanoid" id="B1AT66"/>
<dbReference type="OMA" id="TFFCGVQ"/>
<dbReference type="OrthoDB" id="8055603at2759"/>
<dbReference type="PhylomeDB" id="B1AT66"/>
<dbReference type="TreeFam" id="TF313792"/>
<dbReference type="BioGRID-ORCS" id="104681">
    <property type="hits" value="0 hits in 80 CRISPR screens"/>
</dbReference>
<dbReference type="ChiTaRS" id="Slc16a6">
    <property type="organism name" value="mouse"/>
</dbReference>
<dbReference type="PRO" id="PR:B1AT66"/>
<dbReference type="Proteomes" id="UP000000589">
    <property type="component" value="Chromosome 11"/>
</dbReference>
<dbReference type="RNAct" id="B1AT66">
    <property type="molecule type" value="protein"/>
</dbReference>
<dbReference type="Bgee" id="ENSMUSG00000041920">
    <property type="expression patterns" value="Expressed in retinal neural layer and 229 other cell types or tissues"/>
</dbReference>
<dbReference type="ExpressionAtlas" id="B1AT66">
    <property type="expression patterns" value="baseline and differential"/>
</dbReference>
<dbReference type="GO" id="GO:0016323">
    <property type="term" value="C:basolateral plasma membrane"/>
    <property type="evidence" value="ECO:0000250"/>
    <property type="project" value="UniProtKB"/>
</dbReference>
<dbReference type="GO" id="GO:0005368">
    <property type="term" value="F:taurine transmembrane transporter activity"/>
    <property type="evidence" value="ECO:0000250"/>
    <property type="project" value="UniProtKB"/>
</dbReference>
<dbReference type="CDD" id="cd17422">
    <property type="entry name" value="MFS_MCT7"/>
    <property type="match status" value="1"/>
</dbReference>
<dbReference type="FunFam" id="1.20.1250.20:FF:000326">
    <property type="entry name" value="Solute carrier family 16 member 6"/>
    <property type="match status" value="1"/>
</dbReference>
<dbReference type="FunFam" id="1.20.1250.20:FF:000490">
    <property type="entry name" value="Solute carrier family 16 member 6"/>
    <property type="match status" value="1"/>
</dbReference>
<dbReference type="Gene3D" id="1.20.1250.20">
    <property type="entry name" value="MFS general substrate transporter like domains"/>
    <property type="match status" value="1"/>
</dbReference>
<dbReference type="InterPro" id="IPR030766">
    <property type="entry name" value="MCT7"/>
</dbReference>
<dbReference type="InterPro" id="IPR011701">
    <property type="entry name" value="MFS"/>
</dbReference>
<dbReference type="InterPro" id="IPR020846">
    <property type="entry name" value="MFS_dom"/>
</dbReference>
<dbReference type="InterPro" id="IPR036259">
    <property type="entry name" value="MFS_trans_sf"/>
</dbReference>
<dbReference type="InterPro" id="IPR050327">
    <property type="entry name" value="Proton-linked_MCT"/>
</dbReference>
<dbReference type="PANTHER" id="PTHR11360">
    <property type="entry name" value="MONOCARBOXYLATE TRANSPORTER"/>
    <property type="match status" value="1"/>
</dbReference>
<dbReference type="PANTHER" id="PTHR11360:SF20">
    <property type="entry name" value="MONOCARBOXYLATE TRANSPORTER 7"/>
    <property type="match status" value="1"/>
</dbReference>
<dbReference type="Pfam" id="PF07690">
    <property type="entry name" value="MFS_1"/>
    <property type="match status" value="1"/>
</dbReference>
<dbReference type="SUPFAM" id="SSF103473">
    <property type="entry name" value="MFS general substrate transporter"/>
    <property type="match status" value="1"/>
</dbReference>
<dbReference type="PROSITE" id="PS50850">
    <property type="entry name" value="MFS"/>
    <property type="match status" value="1"/>
</dbReference>
<organism>
    <name type="scientific">Mus musculus</name>
    <name type="common">Mouse</name>
    <dbReference type="NCBI Taxonomy" id="10090"/>
    <lineage>
        <taxon>Eukaryota</taxon>
        <taxon>Metazoa</taxon>
        <taxon>Chordata</taxon>
        <taxon>Craniata</taxon>
        <taxon>Vertebrata</taxon>
        <taxon>Euteleostomi</taxon>
        <taxon>Mammalia</taxon>
        <taxon>Eutheria</taxon>
        <taxon>Euarchontoglires</taxon>
        <taxon>Glires</taxon>
        <taxon>Rodentia</taxon>
        <taxon>Myomorpha</taxon>
        <taxon>Muroidea</taxon>
        <taxon>Muridae</taxon>
        <taxon>Murinae</taxon>
        <taxon>Mus</taxon>
        <taxon>Mus</taxon>
    </lineage>
</organism>
<name>MOT7_MOUSE</name>
<accession>B1AT66</accession>
<accession>D3Z3P6</accession>
<accession>E9Q5J8</accession>
<accession>Q3TCY8</accession>
<accession>Q8C086</accession>
<accession>Q91W47</accession>
<keyword id="KW-0025">Alternative splicing</keyword>
<keyword id="KW-1003">Cell membrane</keyword>
<keyword id="KW-0472">Membrane</keyword>
<keyword id="KW-0597">Phosphoprotein</keyword>
<keyword id="KW-1185">Reference proteome</keyword>
<keyword id="KW-0812">Transmembrane</keyword>
<keyword id="KW-1133">Transmembrane helix</keyword>
<keyword id="KW-0813">Transport</keyword>
<sequence>MRASGQGPQRRRRGWATRDDSAVTFRDPQPRQPAGGARALRGPDPRGPARAHQAGPLLAGARRSQHMVGGAPPRPAETGCSRSRMTQKNSKLCARANVYTQVPDGGWGWAVAVSFFFVEVFTYGIIKSFGVFFNDLMDSFDESNSKISWIISICVFVLTFTAPLSTVLSNRFGHRLVVMAGGLLISLGMITASFSQRVYHMYISIGVISGLGYCFSFLPTVTILSQYFDKRRSVVTAVASTGECFAVFAFAPAITALKEHIGWRYSLLFVGLLQLNIMVCGALLRPIIIQGPGQSPKAVTLEPRREVQYMLENEKTRTSIDSIDSGVELTTSPKNVPSEAKMEQETRAEQQQTLVTAPKHSQMKAPLLDFSVLKEKSFICYALFGLFATLGFFAPSLYIIPLGISLGIDPDRAAFLLSTMAIAEVFGRIGAGFVLNREPIRKIYIELICVILLTASLFAFTFATEFWGLMLCSVFFGSMVGTIGGTHIPMLAEDDVVGIEKMSSAAGVYVFIQSISGLAGPPLAGLLVDQSKIYSRAFYSCAAGMCLAAVCLALVRPCKKGLCQNSHSGENQTDRQRGKALQDIPEDFLEMDLGKCEHRAHMKMDPV</sequence>